<sequence length="539" mass="61527">MRAVLLVCLLAGLAHADLFTAIADLQHMLGAEKDVTTIIDQYIEAERARLDDLRRYAHEYVHRNAHAESVGPEFVTNPINAYLLIKRLTTEWKKVENIMLNNKASTFLKNITDNRVRSEVKFPGEEDLSGAATALLRLQDTYSLDTLDLSNGIIGGEKVSNKLSGHDTFEVGRSAYNQKDYYHCLMWMQVALVKIENENPPTIEEWEILEYLAYSLYQQGNVRRALSLTKRLAKIAPNHPRAKGNVKWYEDMLQGKDMVGDLPPIVNKRVEYDGIVERDAYEALCRGEIPPVEPKWKNKLRCYLKRDKPFLKLAPIKVEILRFDPLAVLFKNVIHDSEIEVIKELASPKLKRATVQNSKTGELEHATYRISKSAWLKGDLDPVIDRVNRRIEDFTNLNQATSEELQVANYGLGGHYDPHFDFARKEEKNAFKTLNTGNRIATVLFYMSQPERGGATVFNHLGTAVFPSKNDALFWYNLRRDGEGDLRTRHAACPVLLGVKWVSNKWIHEKGQEFTRPCGLEEEVQENFIGDLSPYANDP</sequence>
<gene>
    <name type="primary">phy-2</name>
    <name type="ORF">F35G2.4</name>
</gene>
<evidence type="ECO:0000255" key="1"/>
<evidence type="ECO:0000255" key="2">
    <source>
        <dbReference type="PROSITE-ProRule" id="PRU00805"/>
    </source>
</evidence>
<evidence type="ECO:0000269" key="3">
    <source>
    </source>
</evidence>
<evidence type="ECO:0000269" key="4">
    <source>
    </source>
</evidence>
<evidence type="ECO:0000269" key="5">
    <source>
    </source>
</evidence>
<evidence type="ECO:0000305" key="6"/>
<organism>
    <name type="scientific">Caenorhabditis elegans</name>
    <dbReference type="NCBI Taxonomy" id="6239"/>
    <lineage>
        <taxon>Eukaryota</taxon>
        <taxon>Metazoa</taxon>
        <taxon>Ecdysozoa</taxon>
        <taxon>Nematoda</taxon>
        <taxon>Chromadorea</taxon>
        <taxon>Rhabditida</taxon>
        <taxon>Rhabditina</taxon>
        <taxon>Rhabditomorpha</taxon>
        <taxon>Rhabditoidea</taxon>
        <taxon>Rhabditidae</taxon>
        <taxon>Peloderinae</taxon>
        <taxon>Caenorhabditis</taxon>
    </lineage>
</organism>
<keyword id="KW-0223">Dioxygenase</keyword>
<keyword id="KW-0256">Endoplasmic reticulum</keyword>
<keyword id="KW-0325">Glycoprotein</keyword>
<keyword id="KW-0408">Iron</keyword>
<keyword id="KW-0479">Metal-binding</keyword>
<keyword id="KW-0560">Oxidoreductase</keyword>
<keyword id="KW-1185">Reference proteome</keyword>
<keyword id="KW-0732">Signal</keyword>
<keyword id="KW-0847">Vitamin C</keyword>
<protein>
    <recommendedName>
        <fullName>Prolyl 4-hydroxylase subunit alpha-2</fullName>
        <shortName>4-PH alpha-2</shortName>
        <ecNumber>1.14.11.2</ecNumber>
    </recommendedName>
    <alternativeName>
        <fullName>Procollagen-proline,2-oxoglutarate-4-dioxygenase subunit alpha-2</fullName>
    </alternativeName>
</protein>
<proteinExistence type="evidence at protein level"/>
<name>P4HA2_CAEEL</name>
<dbReference type="EC" id="1.14.11.2"/>
<dbReference type="EMBL" id="Z69637">
    <property type="protein sequence ID" value="CAA93469.1"/>
    <property type="molecule type" value="Genomic_DNA"/>
</dbReference>
<dbReference type="PIR" id="T21816">
    <property type="entry name" value="T21816"/>
</dbReference>
<dbReference type="RefSeq" id="NP_502317.1">
    <property type="nucleotide sequence ID" value="NM_069916.7"/>
</dbReference>
<dbReference type="SMR" id="Q20065"/>
<dbReference type="BioGRID" id="43263">
    <property type="interactions" value="10"/>
</dbReference>
<dbReference type="FunCoup" id="Q20065">
    <property type="interactions" value="701"/>
</dbReference>
<dbReference type="STRING" id="6239.F35G2.4.1"/>
<dbReference type="GlyCosmos" id="Q20065">
    <property type="glycosylation" value="1 site, No reported glycans"/>
</dbReference>
<dbReference type="PaxDb" id="6239-F35G2.4"/>
<dbReference type="PeptideAtlas" id="Q20065"/>
<dbReference type="EnsemblMetazoa" id="F35G2.4.1">
    <property type="protein sequence ID" value="F35G2.4.1"/>
    <property type="gene ID" value="WBGene00004025"/>
</dbReference>
<dbReference type="GeneID" id="178170"/>
<dbReference type="KEGG" id="cel:CELE_F35G2.4"/>
<dbReference type="UCSC" id="F35G2.4.1">
    <property type="organism name" value="c. elegans"/>
</dbReference>
<dbReference type="AGR" id="WB:WBGene00004025"/>
<dbReference type="CTD" id="178170"/>
<dbReference type="WormBase" id="F35G2.4">
    <property type="protein sequence ID" value="CE05811"/>
    <property type="gene ID" value="WBGene00004025"/>
    <property type="gene designation" value="phy-2"/>
</dbReference>
<dbReference type="eggNOG" id="KOG1591">
    <property type="taxonomic scope" value="Eukaryota"/>
</dbReference>
<dbReference type="GeneTree" id="ENSGT00940000163795"/>
<dbReference type="HOGENOM" id="CLU_024155_1_1_1"/>
<dbReference type="InParanoid" id="Q20065"/>
<dbReference type="OMA" id="NLTQYRN"/>
<dbReference type="OrthoDB" id="5850448at2759"/>
<dbReference type="PhylomeDB" id="Q20065"/>
<dbReference type="BRENDA" id="1.14.11.2">
    <property type="organism ID" value="1045"/>
</dbReference>
<dbReference type="Reactome" id="R-CEL-1650814">
    <property type="pathway name" value="Collagen biosynthesis and modifying enzymes"/>
</dbReference>
<dbReference type="PRO" id="PR:Q20065"/>
<dbReference type="Proteomes" id="UP000001940">
    <property type="component" value="Chromosome IV"/>
</dbReference>
<dbReference type="Bgee" id="WBGene00004025">
    <property type="expression patterns" value="Expressed in pharyngeal muscle cell (C elegans) and 3 other cell types or tissues"/>
</dbReference>
<dbReference type="GO" id="GO:0005783">
    <property type="term" value="C:endoplasmic reticulum"/>
    <property type="evidence" value="ECO:0000314"/>
    <property type="project" value="WormBase"/>
</dbReference>
<dbReference type="GO" id="GO:0005788">
    <property type="term" value="C:endoplasmic reticulum lumen"/>
    <property type="evidence" value="ECO:0007669"/>
    <property type="project" value="UniProtKB-SubCell"/>
</dbReference>
<dbReference type="GO" id="GO:0005506">
    <property type="term" value="F:iron ion binding"/>
    <property type="evidence" value="ECO:0007669"/>
    <property type="project" value="InterPro"/>
</dbReference>
<dbReference type="GO" id="GO:0031418">
    <property type="term" value="F:L-ascorbic acid binding"/>
    <property type="evidence" value="ECO:0007669"/>
    <property type="project" value="UniProtKB-KW"/>
</dbReference>
<dbReference type="GO" id="GO:0031545">
    <property type="term" value="F:peptidyl-proline 4-dioxygenase activity"/>
    <property type="evidence" value="ECO:0000314"/>
    <property type="project" value="WormBase"/>
</dbReference>
<dbReference type="GO" id="GO:0004656">
    <property type="term" value="F:procollagen-proline 4-dioxygenase activity"/>
    <property type="evidence" value="ECO:0000318"/>
    <property type="project" value="GO_Central"/>
</dbReference>
<dbReference type="GO" id="GO:0043412">
    <property type="term" value="P:macromolecule modification"/>
    <property type="evidence" value="ECO:0000314"/>
    <property type="project" value="WormBase"/>
</dbReference>
<dbReference type="FunFam" id="1.25.40.10:FF:000006">
    <property type="entry name" value="Prolyl 4-hydroxylase subunit alpha 2"/>
    <property type="match status" value="1"/>
</dbReference>
<dbReference type="FunFam" id="2.60.120.620:FF:000001">
    <property type="entry name" value="Prolyl 4-hydroxylase subunit alpha 2"/>
    <property type="match status" value="1"/>
</dbReference>
<dbReference type="Gene3D" id="6.10.140.1460">
    <property type="match status" value="1"/>
</dbReference>
<dbReference type="Gene3D" id="2.60.120.620">
    <property type="entry name" value="q2cbj1_9rhob like domain"/>
    <property type="match status" value="1"/>
</dbReference>
<dbReference type="Gene3D" id="1.25.40.10">
    <property type="entry name" value="Tetratricopeptide repeat domain"/>
    <property type="match status" value="1"/>
</dbReference>
<dbReference type="InterPro" id="IPR005123">
    <property type="entry name" value="Oxoglu/Fe-dep_dioxygenase_dom"/>
</dbReference>
<dbReference type="InterPro" id="IPR045054">
    <property type="entry name" value="P4HA-like"/>
</dbReference>
<dbReference type="InterPro" id="IPR006620">
    <property type="entry name" value="Pro_4_hyd_alph"/>
</dbReference>
<dbReference type="InterPro" id="IPR044862">
    <property type="entry name" value="Pro_4_hyd_alph_FE2OG_OXY"/>
</dbReference>
<dbReference type="InterPro" id="IPR013547">
    <property type="entry name" value="Pro_4_hyd_alph_N"/>
</dbReference>
<dbReference type="InterPro" id="IPR011990">
    <property type="entry name" value="TPR-like_helical_dom_sf"/>
</dbReference>
<dbReference type="PANTHER" id="PTHR10869">
    <property type="entry name" value="PROLYL 4-HYDROXYLASE ALPHA SUBUNIT"/>
    <property type="match status" value="1"/>
</dbReference>
<dbReference type="PANTHER" id="PTHR10869:SF156">
    <property type="entry name" value="PROLYL 4-HYDROXYLASE SUBUNIT ALPHA-2"/>
    <property type="match status" value="1"/>
</dbReference>
<dbReference type="Pfam" id="PF13640">
    <property type="entry name" value="2OG-FeII_Oxy_3"/>
    <property type="match status" value="1"/>
</dbReference>
<dbReference type="Pfam" id="PF08336">
    <property type="entry name" value="P4Ha_N"/>
    <property type="match status" value="1"/>
</dbReference>
<dbReference type="Pfam" id="PF23558">
    <property type="entry name" value="TPR_P4H"/>
    <property type="match status" value="1"/>
</dbReference>
<dbReference type="SMART" id="SM00702">
    <property type="entry name" value="P4Hc"/>
    <property type="match status" value="1"/>
</dbReference>
<dbReference type="SUPFAM" id="SSF48452">
    <property type="entry name" value="TPR-like"/>
    <property type="match status" value="1"/>
</dbReference>
<dbReference type="PROSITE" id="PS51471">
    <property type="entry name" value="FE2OG_OXY"/>
    <property type="match status" value="1"/>
</dbReference>
<comment type="function">
    <text evidence="3 4">Catalyzes the post-translational formation of 4-hydroxyproline in -Xaa-Pro-Gly- sequences in collagens and other proteins.</text>
</comment>
<comment type="catalytic activity">
    <reaction>
        <text>L-prolyl-[collagen] + 2-oxoglutarate + O2 = trans-4-hydroxy-L-prolyl-[collagen] + succinate + CO2</text>
        <dbReference type="Rhea" id="RHEA:18945"/>
        <dbReference type="Rhea" id="RHEA-COMP:11676"/>
        <dbReference type="Rhea" id="RHEA-COMP:11680"/>
        <dbReference type="ChEBI" id="CHEBI:15379"/>
        <dbReference type="ChEBI" id="CHEBI:16526"/>
        <dbReference type="ChEBI" id="CHEBI:16810"/>
        <dbReference type="ChEBI" id="CHEBI:30031"/>
        <dbReference type="ChEBI" id="CHEBI:50342"/>
        <dbReference type="ChEBI" id="CHEBI:61965"/>
        <dbReference type="EC" id="1.14.11.2"/>
    </reaction>
</comment>
<comment type="cofactor">
    <cofactor>
        <name>Fe(2+)</name>
        <dbReference type="ChEBI" id="CHEBI:29033"/>
    </cofactor>
    <text>Binds 1 Fe(2+) ion per subunit.</text>
</comment>
<comment type="cofactor">
    <cofactor>
        <name>L-ascorbate</name>
        <dbReference type="ChEBI" id="CHEBI:38290"/>
    </cofactor>
</comment>
<comment type="subunit">
    <text evidence="5">Heterotetramer of two alpha chains and two beta chains. Exist either as a phy-2(2)/pdi-2(2) tetramer or as a phy-1/phy-2/pdi-2(2) tetramer.</text>
</comment>
<comment type="subcellular location">
    <subcellularLocation>
        <location>Endoplasmic reticulum lumen</location>
    </subcellularLocation>
</comment>
<comment type="similarity">
    <text evidence="6">Belongs to the P4HA family.</text>
</comment>
<accession>Q20065</accession>
<feature type="signal peptide" evidence="1">
    <location>
        <begin position="1"/>
        <end position="16"/>
    </location>
</feature>
<feature type="chain" id="PRO_0000022729" description="Prolyl 4-hydroxylase subunit alpha-2">
    <location>
        <begin position="17"/>
        <end position="539"/>
    </location>
</feature>
<feature type="domain" description="Fe2OG dioxygenase" evidence="2">
    <location>
        <begin position="401"/>
        <end position="509"/>
    </location>
</feature>
<feature type="binding site" evidence="2">
    <location>
        <position position="419"/>
    </location>
    <ligand>
        <name>Fe cation</name>
        <dbReference type="ChEBI" id="CHEBI:24875"/>
    </ligand>
</feature>
<feature type="binding site" evidence="2">
    <location>
        <position position="421"/>
    </location>
    <ligand>
        <name>Fe cation</name>
        <dbReference type="ChEBI" id="CHEBI:24875"/>
    </ligand>
</feature>
<feature type="binding site" evidence="2">
    <location>
        <position position="490"/>
    </location>
    <ligand>
        <name>Fe cation</name>
        <dbReference type="ChEBI" id="CHEBI:24875"/>
    </ligand>
</feature>
<feature type="binding site" evidence="2">
    <location>
        <position position="500"/>
    </location>
    <ligand>
        <name>2-oxoglutarate</name>
        <dbReference type="ChEBI" id="CHEBI:16810"/>
    </ligand>
</feature>
<feature type="glycosylation site" description="N-linked (GlcNAc...) asparagine" evidence="1">
    <location>
        <position position="110"/>
    </location>
</feature>
<reference key="1">
    <citation type="journal article" date="1998" name="Science">
        <title>Genome sequence of the nematode C. elegans: a platform for investigating biology.</title>
        <authorList>
            <consortium name="The C. elegans sequencing consortium"/>
        </authorList>
    </citation>
    <scope>NUCLEOTIDE SEQUENCE [LARGE SCALE GENOMIC DNA]</scope>
    <source>
        <strain>Bristol N2</strain>
    </source>
</reference>
<reference key="2">
    <citation type="journal article" date="2000" name="Mol. Cell. Biol.">
        <title>Prolyl 4-hydroxylase is an essential procollagen-modifying enzyme required for exoskeleton formation and the maintenance of body shape in the nematode Caenorhabditis elegans.</title>
        <authorList>
            <person name="Winter A.D."/>
            <person name="Page A.P."/>
        </authorList>
    </citation>
    <scope>FUNCTION</scope>
</reference>
<reference key="3">
    <citation type="journal article" date="2000" name="Proc. Natl. Acad. Sci. U.S.A.">
        <title>Prolyl 4-hydroxylase is required for viability and morphogenesis in Caenorhabditis elegans.</title>
        <authorList>
            <person name="Friedman L."/>
            <person name="Higgin J.J."/>
            <person name="Moulder G."/>
            <person name="Barstead R."/>
            <person name="Raines R.T."/>
            <person name="Kimble J."/>
        </authorList>
    </citation>
    <scope>FUNCTION</scope>
</reference>
<reference key="4">
    <citation type="journal article" date="2002" name="J. Biol. Chem.">
        <title>The exoskeleton collagens in Caenorhabditis elegans are modified by prolyl 4-hydroxylases with unique combinations of subunits.</title>
        <authorList>
            <person name="Myllyharju J."/>
            <person name="Kukkola L."/>
            <person name="Winter A.D."/>
            <person name="Page A.P."/>
        </authorList>
    </citation>
    <scope>SUBUNIT</scope>
</reference>